<feature type="chain" id="PRO_0000132779" description="Large ribosomal subunit protein eL18">
    <location>
        <begin position="1"/>
        <end position="193"/>
    </location>
</feature>
<feature type="region of interest" description="Disordered" evidence="2">
    <location>
        <begin position="158"/>
        <end position="193"/>
    </location>
</feature>
<feature type="compositionally biased region" description="Basic residues" evidence="2">
    <location>
        <begin position="183"/>
        <end position="193"/>
    </location>
</feature>
<gene>
    <name type="primary">RPL18-A</name>
    <name type="ORF">Tb10.6k15.0410</name>
</gene>
<gene>
    <name type="primary">RPL18-B</name>
    <name type="ORF">Tb11.02.1840</name>
</gene>
<evidence type="ECO:0000250" key="1"/>
<evidence type="ECO:0000256" key="2">
    <source>
        <dbReference type="SAM" id="MobiDB-lite"/>
    </source>
</evidence>
<evidence type="ECO:0000305" key="3"/>
<evidence type="ECO:0000312" key="4">
    <source>
        <dbReference type="Proteomes" id="UP000008524"/>
    </source>
</evidence>
<sequence length="193" mass="21874">MGVDLTGVQKKKRVVRHHTYSTNPYIKLLIKLYKFLGKRTNSPFNKLIHKRLLKSRNNRAPISLSRIAVCMRRRTVWLKKGKKSPIAVIVGDVLDDVRMTRIPALRICALRFSKSARERITGAGGECLTFDQLAMMAPTGKNTMLLRGRKSGRESVKHFGAAGVPGSHAKPHVSSRGKERQRSSKRRHAFRHK</sequence>
<protein>
    <recommendedName>
        <fullName evidence="3">Large ribosomal subunit protein eL18</fullName>
    </recommendedName>
    <alternativeName>
        <fullName>60S ribosomal protein L18</fullName>
    </alternativeName>
</protein>
<organism>
    <name type="scientific">Trypanosoma brucei brucei (strain 927/4 GUTat10.1)</name>
    <dbReference type="NCBI Taxonomy" id="185431"/>
    <lineage>
        <taxon>Eukaryota</taxon>
        <taxon>Discoba</taxon>
        <taxon>Euglenozoa</taxon>
        <taxon>Kinetoplastea</taxon>
        <taxon>Metakinetoplastina</taxon>
        <taxon>Trypanosomatida</taxon>
        <taxon>Trypanosomatidae</taxon>
        <taxon>Trypanosoma</taxon>
    </lineage>
</organism>
<name>RL18_TRYB2</name>
<keyword id="KW-0002">3D-structure</keyword>
<keyword id="KW-0963">Cytoplasm</keyword>
<keyword id="KW-1185">Reference proteome</keyword>
<keyword id="KW-0687">Ribonucleoprotein</keyword>
<keyword id="KW-0689">Ribosomal protein</keyword>
<comment type="subcellular location">
    <subcellularLocation>
        <location evidence="1">Cytoplasm</location>
    </subcellularLocation>
</comment>
<comment type="similarity">
    <text evidence="3">Belongs to the eukaryotic ribosomal protein eL18 family.</text>
</comment>
<proteinExistence type="evidence at protein level"/>
<reference key="1">
    <citation type="journal article" date="1996" name="Biochim. Biophys. Acta">
        <title>The cloning and sequencing of a ribosomal L18 protein from an evolutionary divergent eukaryote, Trypanosoma brucei.</title>
        <authorList>
            <person name="Coulter L.J."/>
            <person name="Hide G."/>
        </authorList>
    </citation>
    <scope>NUCLEOTIDE SEQUENCE [MRNA]</scope>
</reference>
<reference key="2">
    <citation type="journal article" date="2005" name="Science">
        <title>The genome of the African trypanosome Trypanosoma brucei.</title>
        <authorList>
            <person name="Berriman M."/>
            <person name="Ghedin E."/>
            <person name="Hertz-Fowler C."/>
            <person name="Blandin G."/>
            <person name="Renauld H."/>
            <person name="Bartholomeu D.C."/>
            <person name="Lennard N.J."/>
            <person name="Caler E."/>
            <person name="Hamlin N.E."/>
            <person name="Haas B."/>
            <person name="Bohme U."/>
            <person name="Hannick L."/>
            <person name="Aslett M.A."/>
            <person name="Shallom J."/>
            <person name="Marcello L."/>
            <person name="Hou L."/>
            <person name="Wickstead B."/>
            <person name="Alsmark U.C.M."/>
            <person name="Arrowsmith C."/>
            <person name="Atkin R.J."/>
            <person name="Barron A.J."/>
            <person name="Bringaud F."/>
            <person name="Brooks K."/>
            <person name="Carrington M."/>
            <person name="Cherevach I."/>
            <person name="Chillingworth T.J."/>
            <person name="Churcher C."/>
            <person name="Clark L.N."/>
            <person name="Corton C.H."/>
            <person name="Cronin A."/>
            <person name="Davies R.M."/>
            <person name="Doggett J."/>
            <person name="Djikeng A."/>
            <person name="Feldblyum T."/>
            <person name="Field M.C."/>
            <person name="Fraser A."/>
            <person name="Goodhead I."/>
            <person name="Hance Z."/>
            <person name="Harper D."/>
            <person name="Harris B.R."/>
            <person name="Hauser H."/>
            <person name="Hostetler J."/>
            <person name="Ivens A."/>
            <person name="Jagels K."/>
            <person name="Johnson D."/>
            <person name="Johnson J."/>
            <person name="Jones K."/>
            <person name="Kerhornou A.X."/>
            <person name="Koo H."/>
            <person name="Larke N."/>
            <person name="Landfear S."/>
            <person name="Larkin C."/>
            <person name="Leech V."/>
            <person name="Line A."/>
            <person name="Lord A."/>
            <person name="Macleod A."/>
            <person name="Mooney P.J."/>
            <person name="Moule S."/>
            <person name="Martin D.M."/>
            <person name="Morgan G.W."/>
            <person name="Mungall K."/>
            <person name="Norbertczak H."/>
            <person name="Ormond D."/>
            <person name="Pai G."/>
            <person name="Peacock C.S."/>
            <person name="Peterson J."/>
            <person name="Quail M.A."/>
            <person name="Rabbinowitsch E."/>
            <person name="Rajandream M.A."/>
            <person name="Reitter C."/>
            <person name="Salzberg S.L."/>
            <person name="Sanders M."/>
            <person name="Schobel S."/>
            <person name="Sharp S."/>
            <person name="Simmonds M."/>
            <person name="Simpson A.J."/>
            <person name="Tallon L."/>
            <person name="Turner C.M."/>
            <person name="Tait A."/>
            <person name="Tivey A.R."/>
            <person name="Van Aken S."/>
            <person name="Walker D."/>
            <person name="Wanless D."/>
            <person name="Wang S."/>
            <person name="White B."/>
            <person name="White O."/>
            <person name="Whitehead S."/>
            <person name="Woodward J."/>
            <person name="Wortman J."/>
            <person name="Adams M.D."/>
            <person name="Embley T.M."/>
            <person name="Gull K."/>
            <person name="Ullu E."/>
            <person name="Barry J.D."/>
            <person name="Fairlamb A.H."/>
            <person name="Opperdoes F."/>
            <person name="Barrell B.G."/>
            <person name="Donelson J.E."/>
            <person name="Hall N."/>
            <person name="Fraser C.M."/>
            <person name="Melville S.E."/>
            <person name="El-Sayed N.M.A."/>
        </authorList>
    </citation>
    <scope>NUCLEOTIDE SEQUENCE [LARGE SCALE GENOMIC DNA]</scope>
    <source>
        <strain evidence="4">927/4 GUTat10.1</strain>
    </source>
</reference>
<accession>P50885</accession>
<accession>Q385Y7</accession>
<dbReference type="EMBL" id="U47286">
    <property type="protein sequence ID" value="AAC47428.1"/>
    <property type="molecule type" value="mRNA"/>
</dbReference>
<dbReference type="EMBL" id="CM000208">
    <property type="protein sequence ID" value="EAN78382.1"/>
    <property type="molecule type" value="Genomic_DNA"/>
</dbReference>
<dbReference type="EMBL" id="CH464491">
    <property type="protein sequence ID" value="EAN79394.1"/>
    <property type="molecule type" value="Genomic_DNA"/>
</dbReference>
<dbReference type="RefSeq" id="XP_823210.1">
    <property type="nucleotide sequence ID" value="XM_818117.1"/>
</dbReference>
<dbReference type="RefSeq" id="XP_828506.1">
    <property type="nucleotide sequence ID" value="XM_823413.1"/>
</dbReference>
<dbReference type="PDB" id="4V8M">
    <property type="method" value="EM"/>
    <property type="resolution" value="5.57 A"/>
    <property type="chains" value="BI=1-193"/>
</dbReference>
<dbReference type="PDB" id="8OVA">
    <property type="method" value="EM"/>
    <property type="resolution" value="2.47 A"/>
    <property type="chains" value="BI=1-193"/>
</dbReference>
<dbReference type="PDB" id="8OVE">
    <property type="method" value="EM"/>
    <property type="resolution" value="2.60 A"/>
    <property type="chains" value="BI=1-193"/>
</dbReference>
<dbReference type="PDBsum" id="4V8M"/>
<dbReference type="PDBsum" id="8OVA"/>
<dbReference type="PDBsum" id="8OVE"/>
<dbReference type="EMDB" id="EMD-17208"/>
<dbReference type="EMDB" id="EMD-17212"/>
<dbReference type="SMR" id="P50885"/>
<dbReference type="FunCoup" id="P50885">
    <property type="interactions" value="399"/>
</dbReference>
<dbReference type="IntAct" id="P50885">
    <property type="interactions" value="1"/>
</dbReference>
<dbReference type="STRING" id="185431.P50885"/>
<dbReference type="PaxDb" id="5691-EAN78382"/>
<dbReference type="GeneID" id="3661727"/>
<dbReference type="GeneID" id="3664868"/>
<dbReference type="KEGG" id="tbr:Tb10.6k15.0410"/>
<dbReference type="KEGG" id="tbr:Tb11.02.1840"/>
<dbReference type="VEuPathDB" id="TriTrypDB:Tb927.10.9880"/>
<dbReference type="VEuPathDB" id="TriTrypDB:Tb927.11.4300"/>
<dbReference type="eggNOG" id="KOG1714">
    <property type="taxonomic scope" value="Eukaryota"/>
</dbReference>
<dbReference type="InParanoid" id="P50885"/>
<dbReference type="OMA" id="IDICHKN"/>
<dbReference type="OrthoDB" id="243181at2759"/>
<dbReference type="Proteomes" id="UP000008524">
    <property type="component" value="Chromosome 10"/>
</dbReference>
<dbReference type="Proteomes" id="UP000008524">
    <property type="component" value="Chromosome 11 Scaffold 1"/>
</dbReference>
<dbReference type="GO" id="GO:0005737">
    <property type="term" value="C:cytoplasm"/>
    <property type="evidence" value="ECO:0000314"/>
    <property type="project" value="GeneDB"/>
</dbReference>
<dbReference type="GO" id="GO:0022625">
    <property type="term" value="C:cytosolic large ribosomal subunit"/>
    <property type="evidence" value="ECO:0000318"/>
    <property type="project" value="GO_Central"/>
</dbReference>
<dbReference type="GO" id="GO:0005730">
    <property type="term" value="C:nucleolus"/>
    <property type="evidence" value="ECO:0000314"/>
    <property type="project" value="GeneDB"/>
</dbReference>
<dbReference type="GO" id="GO:0005840">
    <property type="term" value="C:ribosome"/>
    <property type="evidence" value="ECO:0000255"/>
    <property type="project" value="GeneDB"/>
</dbReference>
<dbReference type="GO" id="GO:0003723">
    <property type="term" value="F:RNA binding"/>
    <property type="evidence" value="ECO:0000318"/>
    <property type="project" value="GO_Central"/>
</dbReference>
<dbReference type="GO" id="GO:0003735">
    <property type="term" value="F:structural constituent of ribosome"/>
    <property type="evidence" value="ECO:0000255"/>
    <property type="project" value="GeneDB"/>
</dbReference>
<dbReference type="GO" id="GO:0006412">
    <property type="term" value="P:translation"/>
    <property type="evidence" value="ECO:0000255"/>
    <property type="project" value="GeneDB"/>
</dbReference>
<dbReference type="FunFam" id="3.100.10.10:FF:000001">
    <property type="entry name" value="60S ribosomal protein L18"/>
    <property type="match status" value="1"/>
</dbReference>
<dbReference type="Gene3D" id="3.100.10.10">
    <property type="match status" value="1"/>
</dbReference>
<dbReference type="InterPro" id="IPR000039">
    <property type="entry name" value="Ribosomal_eL18"/>
</dbReference>
<dbReference type="InterPro" id="IPR021132">
    <property type="entry name" value="Ribosomal_eL18/eL18-A/B/_CS"/>
</dbReference>
<dbReference type="InterPro" id="IPR021131">
    <property type="entry name" value="Ribosomal_uL15/eL18"/>
</dbReference>
<dbReference type="InterPro" id="IPR036227">
    <property type="entry name" value="Ribosomal_uL15/eL18_sf"/>
</dbReference>
<dbReference type="PANTHER" id="PTHR10934">
    <property type="entry name" value="60S RIBOSOMAL PROTEIN L18"/>
    <property type="match status" value="1"/>
</dbReference>
<dbReference type="PANTHER" id="PTHR10934:SF2">
    <property type="entry name" value="LARGE RIBOSOMAL SUBUNIT PROTEIN EL18"/>
    <property type="match status" value="1"/>
</dbReference>
<dbReference type="Pfam" id="PF17135">
    <property type="entry name" value="Ribosomal_L18"/>
    <property type="match status" value="1"/>
</dbReference>
<dbReference type="SUPFAM" id="SSF52080">
    <property type="entry name" value="Ribosomal proteins L15p and L18e"/>
    <property type="match status" value="1"/>
</dbReference>
<dbReference type="PROSITE" id="PS01106">
    <property type="entry name" value="RIBOSOMAL_L18E"/>
    <property type="match status" value="1"/>
</dbReference>